<dbReference type="EMBL" id="BC136246">
    <property type="protein sequence ID" value="AAI36247.1"/>
    <property type="molecule type" value="mRNA"/>
</dbReference>
<dbReference type="RefSeq" id="NP_001096482.1">
    <property type="nucleotide sequence ID" value="NM_001103012.2"/>
</dbReference>
<dbReference type="SMR" id="A4IJ21"/>
<dbReference type="FunCoup" id="A4IJ21">
    <property type="interactions" value="96"/>
</dbReference>
<dbReference type="STRING" id="8364.ENSXETP00000018757"/>
<dbReference type="PaxDb" id="8364-ENSXETP00000036083"/>
<dbReference type="DNASU" id="100125104"/>
<dbReference type="GeneID" id="100125104"/>
<dbReference type="KEGG" id="xtr:100125104"/>
<dbReference type="AGR" id="Xenbase:XB-GENE-1008457"/>
<dbReference type="CTD" id="55329"/>
<dbReference type="Xenbase" id="XB-GENE-1008457">
    <property type="gene designation" value="mns1"/>
</dbReference>
<dbReference type="eggNOG" id="ENOG502QS9D">
    <property type="taxonomic scope" value="Eukaryota"/>
</dbReference>
<dbReference type="HOGENOM" id="CLU_034848_0_0_1"/>
<dbReference type="InParanoid" id="A4IJ21"/>
<dbReference type="OMA" id="QIRNQMV"/>
<dbReference type="OrthoDB" id="197839at2759"/>
<dbReference type="Proteomes" id="UP000008143">
    <property type="component" value="Chromosome 3"/>
</dbReference>
<dbReference type="Bgee" id="ENSXETG00000016556">
    <property type="expression patterns" value="Expressed in testis and 11 other cell types or tissues"/>
</dbReference>
<dbReference type="GO" id="GO:0005879">
    <property type="term" value="C:axonemal microtubule"/>
    <property type="evidence" value="ECO:0000250"/>
    <property type="project" value="UniProtKB"/>
</dbReference>
<dbReference type="GO" id="GO:0005930">
    <property type="term" value="C:axoneme"/>
    <property type="evidence" value="ECO:0000250"/>
    <property type="project" value="UniProtKB"/>
</dbReference>
<dbReference type="GO" id="GO:0031514">
    <property type="term" value="C:motile cilium"/>
    <property type="evidence" value="ECO:0007669"/>
    <property type="project" value="UniProtKB-KW"/>
</dbReference>
<dbReference type="GO" id="GO:0005634">
    <property type="term" value="C:nucleus"/>
    <property type="evidence" value="ECO:0007669"/>
    <property type="project" value="UniProtKB-SubCell"/>
</dbReference>
<dbReference type="GO" id="GO:0051321">
    <property type="term" value="P:meiotic cell cycle"/>
    <property type="evidence" value="ECO:0007669"/>
    <property type="project" value="UniProtKB-KW"/>
</dbReference>
<dbReference type="InterPro" id="IPR026504">
    <property type="entry name" value="MNS1"/>
</dbReference>
<dbReference type="InterPro" id="IPR043597">
    <property type="entry name" value="TPH_dom"/>
</dbReference>
<dbReference type="PANTHER" id="PTHR19265">
    <property type="entry name" value="MEIOSIS-SPECIFIC NUCLEAR STRUCTURAL PROTEIN 1"/>
    <property type="match status" value="1"/>
</dbReference>
<dbReference type="PANTHER" id="PTHR19265:SF0">
    <property type="entry name" value="MEIOSIS-SPECIFIC NUCLEAR STRUCTURAL PROTEIN 1"/>
    <property type="match status" value="1"/>
</dbReference>
<dbReference type="Pfam" id="PF13868">
    <property type="entry name" value="TPH"/>
    <property type="match status" value="1"/>
</dbReference>
<proteinExistence type="evidence at transcript level"/>
<comment type="function">
    <text evidence="2 3">Microtubule inner protein (MIP) part of the dynein-decorated doublet microtubules (DMTs) in cilia axoneme, which is required for motile cilia beating (By similarity). May play a role in the control of meiotic division and germ cell differentiation through regulation of pairing and recombination during meiosis (By similarity). Required for sperm flagella assembly (By similarity). May play a role in the assembly and function of the outer dynein arm-docking complex (ODA-DC). ODA-DC mediates outer dynein arms (ODA) binding onto the axonemal doublet microtubules (By similarity).</text>
</comment>
<comment type="subcellular location">
    <subcellularLocation>
        <location evidence="2">Nucleus</location>
    </subcellularLocation>
    <subcellularLocation>
        <location evidence="1">Cytoplasm</location>
        <location evidence="1">Cytoskeleton</location>
        <location evidence="1">Cilium axoneme</location>
    </subcellularLocation>
    <subcellularLocation>
        <location evidence="3">Cytoplasm</location>
        <location evidence="3">Cytoskeleton</location>
        <location evidence="3">Flagellum axoneme</location>
    </subcellularLocation>
    <text evidence="1">Microtubule inner protein (MIP) part of the dynein-decorated doublet microtubules (DMTs) in cilia axoneme.</text>
</comment>
<comment type="similarity">
    <text evidence="5">Belongs to the MNS1 family.</text>
</comment>
<feature type="chain" id="PRO_0000298926" description="Meiosis-specific nuclear structural protein 1">
    <location>
        <begin position="1"/>
        <end position="498"/>
    </location>
</feature>
<feature type="coiled-coil region" evidence="4">
    <location>
        <begin position="45"/>
        <end position="211"/>
    </location>
</feature>
<feature type="coiled-coil region" evidence="4">
    <location>
        <begin position="270"/>
        <end position="348"/>
    </location>
</feature>
<feature type="coiled-coil region" evidence="4">
    <location>
        <begin position="385"/>
        <end position="450"/>
    </location>
</feature>
<keyword id="KW-0966">Cell projection</keyword>
<keyword id="KW-0969">Cilium</keyword>
<keyword id="KW-0175">Coiled coil</keyword>
<keyword id="KW-0963">Cytoplasm</keyword>
<keyword id="KW-0206">Cytoskeleton</keyword>
<keyword id="KW-0282">Flagellum</keyword>
<keyword id="KW-0469">Meiosis</keyword>
<keyword id="KW-0539">Nucleus</keyword>
<keyword id="KW-1185">Reference proteome</keyword>
<gene>
    <name type="primary">mns1</name>
</gene>
<reference key="1">
    <citation type="submission" date="2007-03" db="EMBL/GenBank/DDBJ databases">
        <authorList>
            <consortium name="NIH - Xenopus Gene Collection (XGC) project"/>
        </authorList>
    </citation>
    <scope>NUCLEOTIDE SEQUENCE [LARGE SCALE MRNA]</scope>
    <source>
        <tissue>Brain</tissue>
    </source>
</reference>
<organism>
    <name type="scientific">Xenopus tropicalis</name>
    <name type="common">Western clawed frog</name>
    <name type="synonym">Silurana tropicalis</name>
    <dbReference type="NCBI Taxonomy" id="8364"/>
    <lineage>
        <taxon>Eukaryota</taxon>
        <taxon>Metazoa</taxon>
        <taxon>Chordata</taxon>
        <taxon>Craniata</taxon>
        <taxon>Vertebrata</taxon>
        <taxon>Euteleostomi</taxon>
        <taxon>Amphibia</taxon>
        <taxon>Batrachia</taxon>
        <taxon>Anura</taxon>
        <taxon>Pipoidea</taxon>
        <taxon>Pipidae</taxon>
        <taxon>Xenopodinae</taxon>
        <taxon>Xenopus</taxon>
        <taxon>Silurana</taxon>
    </lineage>
</organism>
<name>MNS1_XENTR</name>
<accession>A4IJ21</accession>
<evidence type="ECO:0000250" key="1">
    <source>
        <dbReference type="UniProtKB" id="Q2KIQ2"/>
    </source>
</evidence>
<evidence type="ECO:0000250" key="2">
    <source>
        <dbReference type="UniProtKB" id="Q61884"/>
    </source>
</evidence>
<evidence type="ECO:0000250" key="3">
    <source>
        <dbReference type="UniProtKB" id="Q8NEH6"/>
    </source>
</evidence>
<evidence type="ECO:0000255" key="4"/>
<evidence type="ECO:0000305" key="5"/>
<protein>
    <recommendedName>
        <fullName>Meiosis-specific nuclear structural protein 1</fullName>
    </recommendedName>
</protein>
<sequence length="498" mass="61607">MMMSRKNVTYRQREKLIAEAQRQEFLREDRIKHLNYEQQMAESLKSEERVEKKRFLQRLQNEEHEKRMDEAIQLGEESRRLKERQLEQEERMALEMARIKHEKLKDEKIRQQIRENSTELRELEQKLKAAYLNRERAAQIAEKEVLKYEQMKEDLETVRKMQKDQERAEDEEIVRETKRYQEKLNYQIELERQLEEKEKTRQEAYHEFLKEKILIDEIVRKIYEEDQMETQLKLEKMNATRRYIEEFKEQQQTWRNMEQTRMEEENRKILAFANMQQRREEDRMAEVREREQQKKALQEKLAEQIQKEQQQREELEQMREELYLEEQAEEARQKAISEMEKKIRQRLEMQQTFEEQMAFKQIVQQAAKEEEEAFVQAMLAKFAEDDRIEQMNAQKRRMKQLEHKRAVEKLLEERRQQFIADKERELQERQEEERRESFRRAIIEEERQKILKQHATQLLGYLPKGIFKGEDDLNLFDEGFRQDFQKRRADISSNDGWD</sequence>